<feature type="initiator methionine" description="Removed" evidence="4">
    <location>
        <position position="1"/>
    </location>
</feature>
<feature type="chain" id="PRO_0000208054" description="TBC1 domain family member 22B">
    <location>
        <begin position="2"/>
        <end position="505"/>
    </location>
</feature>
<feature type="domain" description="Rab-GAP TBC" evidence="2">
    <location>
        <begin position="210"/>
        <end position="434"/>
    </location>
</feature>
<feature type="region of interest" description="Disordered" evidence="3">
    <location>
        <begin position="105"/>
        <end position="146"/>
    </location>
</feature>
<feature type="compositionally biased region" description="Polar residues" evidence="3">
    <location>
        <begin position="129"/>
        <end position="146"/>
    </location>
</feature>
<feature type="modified residue" description="N-acetylalanine" evidence="4">
    <location>
        <position position="2"/>
    </location>
</feature>
<feature type="modified residue" description="Phosphoserine" evidence="6">
    <location>
        <position position="58"/>
    </location>
</feature>
<feature type="modified residue" description="Phosphoserine" evidence="6">
    <location>
        <position position="116"/>
    </location>
</feature>
<feature type="modified residue" description="Phosphoserine" evidence="4 6">
    <location>
        <position position="154"/>
    </location>
</feature>
<feature type="mutagenesis site" description="No effect on ACBD3-binding." evidence="4">
    <original>S</original>
    <variation>E</variation>
    <location>
        <position position="58"/>
    </location>
</feature>
<feature type="mutagenesis site" description="No effect on ACBD3-binding." evidence="4">
    <original>LNS</original>
    <variation>AAA</variation>
    <location>
        <begin position="88"/>
        <end position="90"/>
    </location>
</feature>
<feature type="mutagenesis site" description="No effect on ACBD3-binding." evidence="4">
    <original>KV</original>
    <variation>AA</variation>
    <location>
        <begin position="91"/>
        <end position="92"/>
    </location>
</feature>
<feature type="mutagenesis site" description="No effect on ACBD3-binding." evidence="4">
    <original>LAT</original>
    <variation>AAA</variation>
    <location>
        <begin position="94"/>
        <end position="96"/>
    </location>
</feature>
<feature type="mutagenesis site" description="No effect on ACBD3-binding." evidence="4">
    <original>Q</original>
    <variation>A</variation>
    <location>
        <position position="99"/>
    </location>
</feature>
<feature type="mutagenesis site" description="Almost complete loss of ACBD3-binding." evidence="4">
    <original>VL</original>
    <variation>AA</variation>
    <location>
        <begin position="100"/>
        <end position="101"/>
    </location>
</feature>
<feature type="mutagenesis site" description="No effect on ACBD3-binding." evidence="4">
    <original>ENH</original>
    <variation>AAA</variation>
    <location>
        <begin position="102"/>
        <end position="104"/>
    </location>
</feature>
<feature type="mutagenesis site" description="No effect on ACBD3-binding." evidence="4">
    <original>S</original>
    <variation>E</variation>
    <location>
        <position position="114"/>
    </location>
</feature>
<feature type="mutagenesis site" description="No effect on ACBD3-binding." evidence="4">
    <original>STTS</original>
    <variation>EEEE</variation>
    <location>
        <begin position="116"/>
        <end position="119"/>
    </location>
</feature>
<feature type="mutagenesis site" description="No effect on ACBD3-binding." evidence="4">
    <original>SS</original>
    <variation>EE</variation>
    <location>
        <begin position="140"/>
        <end position="141"/>
    </location>
</feature>
<feature type="mutagenesis site" description="No effect on ACBD3-binding." evidence="4">
    <original>T</original>
    <variation>E</variation>
    <location>
        <position position="143"/>
    </location>
</feature>
<feature type="mutagenesis site" description="No effect on ACBD3-binding." evidence="4">
    <original>S</original>
    <variation>E</variation>
    <location>
        <position position="168"/>
    </location>
</feature>
<feature type="sequence conflict" description="In Ref. 6; AAH00291." evidence="5" ref="6">
    <original>KVK</original>
    <variation>HEE</variation>
    <location>
        <begin position="376"/>
        <end position="378"/>
    </location>
</feature>
<feature type="helix" evidence="7">
    <location>
        <begin position="185"/>
        <end position="193"/>
    </location>
</feature>
<feature type="strand" evidence="7">
    <location>
        <begin position="194"/>
        <end position="197"/>
    </location>
</feature>
<feature type="helix" evidence="7">
    <location>
        <begin position="200"/>
        <end position="207"/>
    </location>
</feature>
<feature type="helix" evidence="7">
    <location>
        <begin position="213"/>
        <end position="215"/>
    </location>
</feature>
<feature type="helix" evidence="7">
    <location>
        <begin position="216"/>
        <end position="224"/>
    </location>
</feature>
<feature type="strand" evidence="7">
    <location>
        <begin position="225"/>
        <end position="227"/>
    </location>
</feature>
<feature type="helix" evidence="7">
    <location>
        <begin position="238"/>
        <end position="252"/>
    </location>
</feature>
<feature type="helix" evidence="7">
    <location>
        <begin position="281"/>
        <end position="283"/>
    </location>
</feature>
<feature type="helix" evidence="7">
    <location>
        <begin position="285"/>
        <end position="301"/>
    </location>
</feature>
<feature type="helix" evidence="7">
    <location>
        <begin position="313"/>
        <end position="315"/>
    </location>
</feature>
<feature type="helix" evidence="7">
    <location>
        <begin position="316"/>
        <end position="324"/>
    </location>
</feature>
<feature type="helix" evidence="7">
    <location>
        <begin position="336"/>
        <end position="338"/>
    </location>
</feature>
<feature type="helix" evidence="7">
    <location>
        <begin position="341"/>
        <end position="360"/>
    </location>
</feature>
<feature type="helix" evidence="7">
    <location>
        <begin position="361"/>
        <end position="365"/>
    </location>
</feature>
<feature type="helix" evidence="7">
    <location>
        <begin position="371"/>
        <end position="387"/>
    </location>
</feature>
<feature type="helix" evidence="7">
    <location>
        <begin position="389"/>
        <end position="397"/>
    </location>
</feature>
<feature type="helix" evidence="7">
    <location>
        <begin position="403"/>
        <end position="411"/>
    </location>
</feature>
<feature type="turn" evidence="7">
    <location>
        <begin position="412"/>
        <end position="414"/>
    </location>
</feature>
<feature type="helix" evidence="7">
    <location>
        <begin position="415"/>
        <end position="417"/>
    </location>
</feature>
<feature type="helix" evidence="7">
    <location>
        <begin position="420"/>
        <end position="432"/>
    </location>
</feature>
<feature type="helix" evidence="7">
    <location>
        <begin position="440"/>
        <end position="451"/>
    </location>
</feature>
<feature type="helix" evidence="7">
    <location>
        <begin position="453"/>
        <end position="457"/>
    </location>
</feature>
<feature type="helix" evidence="7">
    <location>
        <begin position="462"/>
        <end position="470"/>
    </location>
</feature>
<feature type="helix" evidence="7">
    <location>
        <begin position="479"/>
        <end position="495"/>
    </location>
</feature>
<feature type="turn" evidence="7">
    <location>
        <begin position="496"/>
        <end position="498"/>
    </location>
</feature>
<sequence length="505" mass="59081">MAAENSKQFWKRSAKLPGSIQPVYGAQHPPLDPRLTKNFIKERSKVNTVPLKNKKASSFHEFARNTSDAWDIGDDEEEDFSSPSFQTLNSKVALATAAQVLENHSKLRVKPERSQSTTSDVPANYKVIKSSSDAQLSRNSSDTCLRNPLHKQQSLPLRPIIPLVARISDQNASGAPPMTVREKTRLEKFRQLLSSQNTDLDELRKCSWPGVPREVRPITWRLLSGYLPANTERRKLTLQRKREEYFGFIEQYYDSRNEEHHQDTYRQIHIDIPRTNPLIPLFQQPLVQEIFERILFIWAIRHPASGYVQGINDLVTPFFVVFLSEYVEEDVENFDVTNLSQDMLRSIEADSFWCMSKLLDGIQDNYTFAQPGIQKKVKALEELVSRIDEQVHNHFRRYEVEYLQFAFRWMNNLLMRELPLRCTIRLWDTYQSEPEGFSHFHLYVCAAFLIKWRKEILDEEDFQGLLMLLQNLPTIHWGNEEIGLLLAEAYRLKYMFADAPNHYRR</sequence>
<protein>
    <recommendedName>
        <fullName>TBC1 domain family member 22B</fullName>
    </recommendedName>
</protein>
<reference key="1">
    <citation type="journal article" date="2009" name="Genes Cells">
        <title>Identification and characterization of a novel Tre-2/Bub2/Cdc16 (TBC) protein that possesses Rab3A-GAP activity.</title>
        <authorList>
            <person name="Ishibashi K."/>
            <person name="Kanno E."/>
            <person name="Itoh T."/>
            <person name="Fukuda M."/>
        </authorList>
    </citation>
    <scope>NUCLEOTIDE SEQUENCE [MRNA]</scope>
    <source>
        <tissue>Brain</tissue>
    </source>
</reference>
<reference key="2">
    <citation type="submission" date="2003-06" db="EMBL/GenBank/DDBJ databases">
        <authorList>
            <person name="Shan Y.X."/>
            <person name="Huang C.Q."/>
            <person name="Guo Z.K."/>
            <person name="Ye M.G."/>
            <person name="Yu L."/>
        </authorList>
    </citation>
    <scope>NUCLEOTIDE SEQUENCE [MRNA]</scope>
</reference>
<reference key="3">
    <citation type="journal article" date="2004" name="Nat. Genet.">
        <title>Complete sequencing and characterization of 21,243 full-length human cDNAs.</title>
        <authorList>
            <person name="Ota T."/>
            <person name="Suzuki Y."/>
            <person name="Nishikawa T."/>
            <person name="Otsuki T."/>
            <person name="Sugiyama T."/>
            <person name="Irie R."/>
            <person name="Wakamatsu A."/>
            <person name="Hayashi K."/>
            <person name="Sato H."/>
            <person name="Nagai K."/>
            <person name="Kimura K."/>
            <person name="Makita H."/>
            <person name="Sekine M."/>
            <person name="Obayashi M."/>
            <person name="Nishi T."/>
            <person name="Shibahara T."/>
            <person name="Tanaka T."/>
            <person name="Ishii S."/>
            <person name="Yamamoto J."/>
            <person name="Saito K."/>
            <person name="Kawai Y."/>
            <person name="Isono Y."/>
            <person name="Nakamura Y."/>
            <person name="Nagahari K."/>
            <person name="Murakami K."/>
            <person name="Yasuda T."/>
            <person name="Iwayanagi T."/>
            <person name="Wagatsuma M."/>
            <person name="Shiratori A."/>
            <person name="Sudo H."/>
            <person name="Hosoiri T."/>
            <person name="Kaku Y."/>
            <person name="Kodaira H."/>
            <person name="Kondo H."/>
            <person name="Sugawara M."/>
            <person name="Takahashi M."/>
            <person name="Kanda K."/>
            <person name="Yokoi T."/>
            <person name="Furuya T."/>
            <person name="Kikkawa E."/>
            <person name="Omura Y."/>
            <person name="Abe K."/>
            <person name="Kamihara K."/>
            <person name="Katsuta N."/>
            <person name="Sato K."/>
            <person name="Tanikawa M."/>
            <person name="Yamazaki M."/>
            <person name="Ninomiya K."/>
            <person name="Ishibashi T."/>
            <person name="Yamashita H."/>
            <person name="Murakawa K."/>
            <person name="Fujimori K."/>
            <person name="Tanai H."/>
            <person name="Kimata M."/>
            <person name="Watanabe M."/>
            <person name="Hiraoka S."/>
            <person name="Chiba Y."/>
            <person name="Ishida S."/>
            <person name="Ono Y."/>
            <person name="Takiguchi S."/>
            <person name="Watanabe S."/>
            <person name="Yosida M."/>
            <person name="Hotuta T."/>
            <person name="Kusano J."/>
            <person name="Kanehori K."/>
            <person name="Takahashi-Fujii A."/>
            <person name="Hara H."/>
            <person name="Tanase T.-O."/>
            <person name="Nomura Y."/>
            <person name="Togiya S."/>
            <person name="Komai F."/>
            <person name="Hara R."/>
            <person name="Takeuchi K."/>
            <person name="Arita M."/>
            <person name="Imose N."/>
            <person name="Musashino K."/>
            <person name="Yuuki H."/>
            <person name="Oshima A."/>
            <person name="Sasaki N."/>
            <person name="Aotsuka S."/>
            <person name="Yoshikawa Y."/>
            <person name="Matsunawa H."/>
            <person name="Ichihara T."/>
            <person name="Shiohata N."/>
            <person name="Sano S."/>
            <person name="Moriya S."/>
            <person name="Momiyama H."/>
            <person name="Satoh N."/>
            <person name="Takami S."/>
            <person name="Terashima Y."/>
            <person name="Suzuki O."/>
            <person name="Nakagawa S."/>
            <person name="Senoh A."/>
            <person name="Mizoguchi H."/>
            <person name="Goto Y."/>
            <person name="Shimizu F."/>
            <person name="Wakebe H."/>
            <person name="Hishigaki H."/>
            <person name="Watanabe T."/>
            <person name="Sugiyama A."/>
            <person name="Takemoto M."/>
            <person name="Kawakami B."/>
            <person name="Yamazaki M."/>
            <person name="Watanabe K."/>
            <person name="Kumagai A."/>
            <person name="Itakura S."/>
            <person name="Fukuzumi Y."/>
            <person name="Fujimori Y."/>
            <person name="Komiyama M."/>
            <person name="Tashiro H."/>
            <person name="Tanigami A."/>
            <person name="Fujiwara T."/>
            <person name="Ono T."/>
            <person name="Yamada K."/>
            <person name="Fujii Y."/>
            <person name="Ozaki K."/>
            <person name="Hirao M."/>
            <person name="Ohmori Y."/>
            <person name="Kawabata A."/>
            <person name="Hikiji T."/>
            <person name="Kobatake N."/>
            <person name="Inagaki H."/>
            <person name="Ikema Y."/>
            <person name="Okamoto S."/>
            <person name="Okitani R."/>
            <person name="Kawakami T."/>
            <person name="Noguchi S."/>
            <person name="Itoh T."/>
            <person name="Shigeta K."/>
            <person name="Senba T."/>
            <person name="Matsumura K."/>
            <person name="Nakajima Y."/>
            <person name="Mizuno T."/>
            <person name="Morinaga M."/>
            <person name="Sasaki M."/>
            <person name="Togashi T."/>
            <person name="Oyama M."/>
            <person name="Hata H."/>
            <person name="Watanabe M."/>
            <person name="Komatsu T."/>
            <person name="Mizushima-Sugano J."/>
            <person name="Satoh T."/>
            <person name="Shirai Y."/>
            <person name="Takahashi Y."/>
            <person name="Nakagawa K."/>
            <person name="Okumura K."/>
            <person name="Nagase T."/>
            <person name="Nomura N."/>
            <person name="Kikuchi H."/>
            <person name="Masuho Y."/>
            <person name="Yamashita R."/>
            <person name="Nakai K."/>
            <person name="Yada T."/>
            <person name="Nakamura Y."/>
            <person name="Ohara O."/>
            <person name="Isogai T."/>
            <person name="Sugano S."/>
        </authorList>
    </citation>
    <scope>NUCLEOTIDE SEQUENCE [LARGE SCALE MRNA]</scope>
    <source>
        <tissue>Trachea</tissue>
    </source>
</reference>
<reference key="4">
    <citation type="journal article" date="2003" name="Nature">
        <title>The DNA sequence and analysis of human chromosome 6.</title>
        <authorList>
            <person name="Mungall A.J."/>
            <person name="Palmer S.A."/>
            <person name="Sims S.K."/>
            <person name="Edwards C.A."/>
            <person name="Ashurst J.L."/>
            <person name="Wilming L."/>
            <person name="Jones M.C."/>
            <person name="Horton R."/>
            <person name="Hunt S.E."/>
            <person name="Scott C.E."/>
            <person name="Gilbert J.G.R."/>
            <person name="Clamp M.E."/>
            <person name="Bethel G."/>
            <person name="Milne S."/>
            <person name="Ainscough R."/>
            <person name="Almeida J.P."/>
            <person name="Ambrose K.D."/>
            <person name="Andrews T.D."/>
            <person name="Ashwell R.I.S."/>
            <person name="Babbage A.K."/>
            <person name="Bagguley C.L."/>
            <person name="Bailey J."/>
            <person name="Banerjee R."/>
            <person name="Barker D.J."/>
            <person name="Barlow K.F."/>
            <person name="Bates K."/>
            <person name="Beare D.M."/>
            <person name="Beasley H."/>
            <person name="Beasley O."/>
            <person name="Bird C.P."/>
            <person name="Blakey S.E."/>
            <person name="Bray-Allen S."/>
            <person name="Brook J."/>
            <person name="Brown A.J."/>
            <person name="Brown J.Y."/>
            <person name="Burford D.C."/>
            <person name="Burrill W."/>
            <person name="Burton J."/>
            <person name="Carder C."/>
            <person name="Carter N.P."/>
            <person name="Chapman J.C."/>
            <person name="Clark S.Y."/>
            <person name="Clark G."/>
            <person name="Clee C.M."/>
            <person name="Clegg S."/>
            <person name="Cobley V."/>
            <person name="Collier R.E."/>
            <person name="Collins J.E."/>
            <person name="Colman L.K."/>
            <person name="Corby N.R."/>
            <person name="Coville G.J."/>
            <person name="Culley K.M."/>
            <person name="Dhami P."/>
            <person name="Davies J."/>
            <person name="Dunn M."/>
            <person name="Earthrowl M.E."/>
            <person name="Ellington A.E."/>
            <person name="Evans K.A."/>
            <person name="Faulkner L."/>
            <person name="Francis M.D."/>
            <person name="Frankish A."/>
            <person name="Frankland J."/>
            <person name="French L."/>
            <person name="Garner P."/>
            <person name="Garnett J."/>
            <person name="Ghori M.J."/>
            <person name="Gilby L.M."/>
            <person name="Gillson C.J."/>
            <person name="Glithero R.J."/>
            <person name="Grafham D.V."/>
            <person name="Grant M."/>
            <person name="Gribble S."/>
            <person name="Griffiths C."/>
            <person name="Griffiths M.N.D."/>
            <person name="Hall R."/>
            <person name="Halls K.S."/>
            <person name="Hammond S."/>
            <person name="Harley J.L."/>
            <person name="Hart E.A."/>
            <person name="Heath P.D."/>
            <person name="Heathcott R."/>
            <person name="Holmes S.J."/>
            <person name="Howden P.J."/>
            <person name="Howe K.L."/>
            <person name="Howell G.R."/>
            <person name="Huckle E."/>
            <person name="Humphray S.J."/>
            <person name="Humphries M.D."/>
            <person name="Hunt A.R."/>
            <person name="Johnson C.M."/>
            <person name="Joy A.A."/>
            <person name="Kay M."/>
            <person name="Keenan S.J."/>
            <person name="Kimberley A.M."/>
            <person name="King A."/>
            <person name="Laird G.K."/>
            <person name="Langford C."/>
            <person name="Lawlor S."/>
            <person name="Leongamornlert D.A."/>
            <person name="Leversha M."/>
            <person name="Lloyd C.R."/>
            <person name="Lloyd D.M."/>
            <person name="Loveland J.E."/>
            <person name="Lovell J."/>
            <person name="Martin S."/>
            <person name="Mashreghi-Mohammadi M."/>
            <person name="Maslen G.L."/>
            <person name="Matthews L."/>
            <person name="McCann O.T."/>
            <person name="McLaren S.J."/>
            <person name="McLay K."/>
            <person name="McMurray A."/>
            <person name="Moore M.J.F."/>
            <person name="Mullikin J.C."/>
            <person name="Niblett D."/>
            <person name="Nickerson T."/>
            <person name="Novik K.L."/>
            <person name="Oliver K."/>
            <person name="Overton-Larty E.K."/>
            <person name="Parker A."/>
            <person name="Patel R."/>
            <person name="Pearce A.V."/>
            <person name="Peck A.I."/>
            <person name="Phillimore B.J.C.T."/>
            <person name="Phillips S."/>
            <person name="Plumb R.W."/>
            <person name="Porter K.M."/>
            <person name="Ramsey Y."/>
            <person name="Ranby S.A."/>
            <person name="Rice C.M."/>
            <person name="Ross M.T."/>
            <person name="Searle S.M."/>
            <person name="Sehra H.K."/>
            <person name="Sheridan E."/>
            <person name="Skuce C.D."/>
            <person name="Smith S."/>
            <person name="Smith M."/>
            <person name="Spraggon L."/>
            <person name="Squares S.L."/>
            <person name="Steward C.A."/>
            <person name="Sycamore N."/>
            <person name="Tamlyn-Hall G."/>
            <person name="Tester J."/>
            <person name="Theaker A.J."/>
            <person name="Thomas D.W."/>
            <person name="Thorpe A."/>
            <person name="Tracey A."/>
            <person name="Tromans A."/>
            <person name="Tubby B."/>
            <person name="Wall M."/>
            <person name="Wallis J.M."/>
            <person name="West A.P."/>
            <person name="White S.S."/>
            <person name="Whitehead S.L."/>
            <person name="Whittaker H."/>
            <person name="Wild A."/>
            <person name="Willey D.J."/>
            <person name="Wilmer T.E."/>
            <person name="Wood J.M."/>
            <person name="Wray P.W."/>
            <person name="Wyatt J.C."/>
            <person name="Young L."/>
            <person name="Younger R.M."/>
            <person name="Bentley D.R."/>
            <person name="Coulson A."/>
            <person name="Durbin R.M."/>
            <person name="Hubbard T."/>
            <person name="Sulston J.E."/>
            <person name="Dunham I."/>
            <person name="Rogers J."/>
            <person name="Beck S."/>
        </authorList>
    </citation>
    <scope>NUCLEOTIDE SEQUENCE [LARGE SCALE GENOMIC DNA]</scope>
</reference>
<reference key="5">
    <citation type="submission" date="2005-07" db="EMBL/GenBank/DDBJ databases">
        <authorList>
            <person name="Mural R.J."/>
            <person name="Istrail S."/>
            <person name="Sutton G."/>
            <person name="Florea L."/>
            <person name="Halpern A.L."/>
            <person name="Mobarry C.M."/>
            <person name="Lippert R."/>
            <person name="Walenz B."/>
            <person name="Shatkay H."/>
            <person name="Dew I."/>
            <person name="Miller J.R."/>
            <person name="Flanigan M.J."/>
            <person name="Edwards N.J."/>
            <person name="Bolanos R."/>
            <person name="Fasulo D."/>
            <person name="Halldorsson B.V."/>
            <person name="Hannenhalli S."/>
            <person name="Turner R."/>
            <person name="Yooseph S."/>
            <person name="Lu F."/>
            <person name="Nusskern D.R."/>
            <person name="Shue B.C."/>
            <person name="Zheng X.H."/>
            <person name="Zhong F."/>
            <person name="Delcher A.L."/>
            <person name="Huson D.H."/>
            <person name="Kravitz S.A."/>
            <person name="Mouchard L."/>
            <person name="Reinert K."/>
            <person name="Remington K.A."/>
            <person name="Clark A.G."/>
            <person name="Waterman M.S."/>
            <person name="Eichler E.E."/>
            <person name="Adams M.D."/>
            <person name="Hunkapiller M.W."/>
            <person name="Myers E.W."/>
            <person name="Venter J.C."/>
        </authorList>
    </citation>
    <scope>NUCLEOTIDE SEQUENCE [LARGE SCALE GENOMIC DNA]</scope>
</reference>
<reference key="6">
    <citation type="journal article" date="2004" name="Genome Res.">
        <title>The status, quality, and expansion of the NIH full-length cDNA project: the Mammalian Gene Collection (MGC).</title>
        <authorList>
            <consortium name="The MGC Project Team"/>
        </authorList>
    </citation>
    <scope>NUCLEOTIDE SEQUENCE [LARGE SCALE MRNA]</scope>
    <source>
        <tissue>Bone</tissue>
        <tissue>Lung</tissue>
        <tissue>Uterus</tissue>
    </source>
</reference>
<reference key="7">
    <citation type="journal article" date="2013" name="MBio">
        <title>ACBD3 interaction with TBC1 domain 22 protein is differentially affected by enteroviral and kobuviral 3A protein binding.</title>
        <authorList>
            <person name="Greninger A.L."/>
            <person name="Knudsen G.M."/>
            <person name="Betegon M."/>
            <person name="Burlingame A.L."/>
            <person name="DeRisi J.L."/>
        </authorList>
    </citation>
    <scope>PROTEIN SEQUENCE OF 2-293; 346-421 AND 454-505</scope>
    <scope>CLEAVAGE OF INITIATOR METHIONINE</scope>
    <scope>ACETYLATION AT ALA-2</scope>
    <scope>PHOSPHORYLATION AT SER-154</scope>
    <scope>INTERACTION WITH ACBD3; ARFGEF1; YWHAB; YWHAE; YWHAG; YWHAH; YWHAQ AND YWHAZ</scope>
    <scope>MUTAGENESIS OF SER-58; 88-LEU--SER-90; 91-LYS-VAL-92; 94-LEU--THR-96; GLN-99; 100-VAL-LEU-101; 102-GLU--HIS-104; SER-114; 116-SER--SER-119; 140-SER-SER-141; THR-143 AND SER-168</scope>
    <scope>MASS SPECTROMETRY</scope>
</reference>
<reference key="8">
    <citation type="journal article" date="2009" name="Sci. Signal.">
        <title>Quantitative phosphoproteomic analysis of T cell receptor signaling reveals system-wide modulation of protein-protein interactions.</title>
        <authorList>
            <person name="Mayya V."/>
            <person name="Lundgren D.H."/>
            <person name="Hwang S.-I."/>
            <person name="Rezaul K."/>
            <person name="Wu L."/>
            <person name="Eng J.K."/>
            <person name="Rodionov V."/>
            <person name="Han D.K."/>
        </authorList>
    </citation>
    <scope>IDENTIFICATION BY MASS SPECTROMETRY [LARGE SCALE ANALYSIS]</scope>
    <source>
        <tissue>Leukemic T-cell</tissue>
    </source>
</reference>
<reference key="9">
    <citation type="journal article" date="2013" name="J. Proteome Res.">
        <title>Toward a comprehensive characterization of a human cancer cell phosphoproteome.</title>
        <authorList>
            <person name="Zhou H."/>
            <person name="Di Palma S."/>
            <person name="Preisinger C."/>
            <person name="Peng M."/>
            <person name="Polat A.N."/>
            <person name="Heck A.J."/>
            <person name="Mohammed S."/>
        </authorList>
    </citation>
    <scope>PHOSPHORYLATION [LARGE SCALE ANALYSIS] AT SER-58; SER-116 AND SER-154</scope>
    <scope>IDENTIFICATION BY MASS SPECTROMETRY [LARGE SCALE ANALYSIS]</scope>
    <source>
        <tissue>Cervix carcinoma</tissue>
        <tissue>Erythroleukemia</tissue>
    </source>
</reference>
<reference key="10">
    <citation type="journal article" date="2014" name="J. Proteomics">
        <title>An enzyme assisted RP-RPLC approach for in-depth analysis of human liver phosphoproteome.</title>
        <authorList>
            <person name="Bian Y."/>
            <person name="Song C."/>
            <person name="Cheng K."/>
            <person name="Dong M."/>
            <person name="Wang F."/>
            <person name="Huang J."/>
            <person name="Sun D."/>
            <person name="Wang L."/>
            <person name="Ye M."/>
            <person name="Zou H."/>
        </authorList>
    </citation>
    <scope>IDENTIFICATION BY MASS SPECTROMETRY [LARGE SCALE ANALYSIS]</scope>
    <source>
        <tissue>Liver</tissue>
    </source>
</reference>
<reference key="11">
    <citation type="submission" date="2009-02" db="PDB data bank">
        <title>Crystal structure of the RabGAP domain of human TBC1D22B.</title>
        <authorList>
            <consortium name="Structural genomics consortium (SGC)"/>
        </authorList>
    </citation>
    <scope>X-RAY CRYSTALLOGRAPHY (2.3 ANGSTROMS) OF 178-505</scope>
</reference>
<proteinExistence type="evidence at protein level"/>
<keyword id="KW-0002">3D-structure</keyword>
<keyword id="KW-0007">Acetylation</keyword>
<keyword id="KW-0903">Direct protein sequencing</keyword>
<keyword id="KW-0343">GTPase activation</keyword>
<keyword id="KW-0597">Phosphoprotein</keyword>
<keyword id="KW-1267">Proteomics identification</keyword>
<keyword id="KW-1185">Reference proteome</keyword>
<comment type="function">
    <text evidence="1">May act as a GTPase-activating protein for Rab family protein(s).</text>
</comment>
<comment type="subunit">
    <text evidence="4">Interacts with ACBD3 and ARFGEF1. Interacts with YWHAB, YWHAE, YWHAG, YWHAH, YWHAQ and YWHAZ.</text>
</comment>
<comment type="interaction">
    <interactant intactId="EBI-8787464">
        <id>Q9NU19</id>
    </interactant>
    <interactant intactId="EBI-1791792">
        <id>Q9H3P7</id>
        <label>ACBD3</label>
    </interactant>
    <organismsDiffer>false</organismsDiffer>
    <experiments>7</experiments>
</comment>
<comment type="interaction">
    <interactant intactId="EBI-8787464">
        <id>Q9NU19</id>
    </interactant>
    <interactant intactId="EBI-11978055">
        <id>Q10567-3</id>
        <label>AP1B1</label>
    </interactant>
    <organismsDiffer>false</organismsDiffer>
    <experiments>3</experiments>
</comment>
<comment type="interaction">
    <interactant intactId="EBI-8787464">
        <id>Q9NU19</id>
    </interactant>
    <interactant intactId="EBI-3447299">
        <id>O43307</id>
        <label>ARHGEF9</label>
    </interactant>
    <organismsDiffer>false</organismsDiffer>
    <experiments>3</experiments>
</comment>
<comment type="interaction">
    <interactant intactId="EBI-8787464">
        <id>Q9NU19</id>
    </interactant>
    <interactant intactId="EBI-2548012">
        <id>Q9H2G9</id>
        <label>BLZF1</label>
    </interactant>
    <organismsDiffer>false</organismsDiffer>
    <experiments>3</experiments>
</comment>
<comment type="interaction">
    <interactant intactId="EBI-8787464">
        <id>Q9NU19</id>
    </interactant>
    <interactant intactId="EBI-739580">
        <id>Q13137</id>
        <label>CALCOCO2</label>
    </interactant>
    <organismsDiffer>false</organismsDiffer>
    <experiments>3</experiments>
</comment>
<comment type="interaction">
    <interactant intactId="EBI-8787464">
        <id>Q9NU19</id>
    </interactant>
    <interactant intactId="EBI-3866279">
        <id>Q9BWT7</id>
        <label>CARD10</label>
    </interactant>
    <organismsDiffer>false</organismsDiffer>
    <experiments>3</experiments>
</comment>
<comment type="interaction">
    <interactant intactId="EBI-8787464">
        <id>Q9NU19</id>
    </interactant>
    <interactant intactId="EBI-2808286">
        <id>Q2TAC2</id>
        <label>CCDC57</label>
    </interactant>
    <organismsDiffer>false</organismsDiffer>
    <experiments>3</experiments>
</comment>
<comment type="interaction">
    <interactant intactId="EBI-8787464">
        <id>Q9NU19</id>
    </interactant>
    <interactant intactId="EBI-347573">
        <id>A6NC98</id>
        <label>CCDC88B</label>
    </interactant>
    <organismsDiffer>false</organismsDiffer>
    <experiments>3</experiments>
</comment>
<comment type="interaction">
    <interactant intactId="EBI-8787464">
        <id>Q9NU19</id>
    </interactant>
    <interactant intactId="EBI-1181367">
        <id>Q01850</id>
        <label>CDR2</label>
    </interactant>
    <organismsDiffer>false</organismsDiffer>
    <experiments>4</experiments>
</comment>
<comment type="interaction">
    <interactant intactId="EBI-8787464">
        <id>Q9NU19</id>
    </interactant>
    <interactant intactId="EBI-11522539">
        <id>Q96MT8-3</id>
        <label>CEP63</label>
    </interactant>
    <organismsDiffer>false</organismsDiffer>
    <experiments>3</experiments>
</comment>
<comment type="interaction">
    <interactant intactId="EBI-8787464">
        <id>Q9NU19</id>
    </interactant>
    <interactant intactId="EBI-739624">
        <id>Q8NHQ1</id>
        <label>CEP70</label>
    </interactant>
    <organismsDiffer>false</organismsDiffer>
    <experiments>3</experiments>
</comment>
<comment type="interaction">
    <interactant intactId="EBI-8787464">
        <id>Q9NU19</id>
    </interactant>
    <interactant intactId="EBI-3866319">
        <id>Q9Y2V7</id>
        <label>COG6</label>
    </interactant>
    <organismsDiffer>false</organismsDiffer>
    <experiments>3</experiments>
</comment>
<comment type="interaction">
    <interactant intactId="EBI-8787464">
        <id>Q9NU19</id>
    </interactant>
    <interactant intactId="EBI-742054">
        <id>Q96D03</id>
        <label>DDIT4L</label>
    </interactant>
    <organismsDiffer>false</organismsDiffer>
    <experiments>3</experiments>
</comment>
<comment type="interaction">
    <interactant intactId="EBI-8787464">
        <id>Q9NU19</id>
    </interactant>
    <interactant intactId="EBI-748597">
        <id>Q05D60</id>
        <label>DEUP1</label>
    </interactant>
    <organismsDiffer>false</organismsDiffer>
    <experiments>4</experiments>
</comment>
<comment type="interaction">
    <interactant intactId="EBI-8787464">
        <id>Q9NU19</id>
    </interactant>
    <interactant intactId="EBI-2349927">
        <id>Q5JST6</id>
        <label>EFHC2</label>
    </interactant>
    <organismsDiffer>false</organismsDiffer>
    <experiments>3</experiments>
</comment>
<comment type="interaction">
    <interactant intactId="EBI-8787464">
        <id>Q9NU19</id>
    </interactant>
    <interactant intactId="EBI-742102">
        <id>Q8IYI6</id>
        <label>EXOC8</label>
    </interactant>
    <organismsDiffer>false</organismsDiffer>
    <experiments>3</experiments>
</comment>
<comment type="interaction">
    <interactant intactId="EBI-8787464">
        <id>Q9NU19</id>
    </interactant>
    <interactant intactId="EBI-741101">
        <id>Q13643</id>
        <label>FHL3</label>
    </interactant>
    <organismsDiffer>false</organismsDiffer>
    <experiments>3</experiments>
</comment>
<comment type="interaction">
    <interactant intactId="EBI-8787464">
        <id>Q9NU19</id>
    </interactant>
    <interactant intactId="EBI-11022345">
        <id>P51114-2</id>
        <label>FXR1</label>
    </interactant>
    <organismsDiffer>false</organismsDiffer>
    <experiments>3</experiments>
</comment>
<comment type="interaction">
    <interactant intactId="EBI-8787464">
        <id>Q9NU19</id>
    </interactant>
    <interactant intactId="EBI-740459">
        <id>P51116</id>
        <label>FXR2</label>
    </interactant>
    <organismsDiffer>false</organismsDiffer>
    <experiments>5</experiments>
</comment>
<comment type="interaction">
    <interactant intactId="EBI-8787464">
        <id>Q9NU19</id>
    </interactant>
    <interactant intactId="EBI-744302">
        <id>P14136</id>
        <label>GFAP</label>
    </interactant>
    <organismsDiffer>false</organismsDiffer>
    <experiments>3</experiments>
</comment>
<comment type="interaction">
    <interactant intactId="EBI-8787464">
        <id>Q9NU19</id>
    </interactant>
    <interactant intactId="EBI-618309">
        <id>Q08379</id>
        <label>GOLGA2</label>
    </interactant>
    <organismsDiffer>false</organismsDiffer>
    <experiments>5</experiments>
</comment>
<comment type="interaction">
    <interactant intactId="EBI-8787464">
        <id>Q9NU19</id>
    </interactant>
    <interactant intactId="EBI-740641">
        <id>Q9NP66</id>
        <label>HMG20A</label>
    </interactant>
    <organismsDiffer>false</organismsDiffer>
    <experiments>3</experiments>
</comment>
<comment type="interaction">
    <interactant intactId="EBI-8787464">
        <id>Q9NU19</id>
    </interactant>
    <interactant intactId="EBI-748420">
        <id>Q9NSC5</id>
        <label>HOMER3</label>
    </interactant>
    <organismsDiffer>false</organismsDiffer>
    <experiments>3</experiments>
</comment>
<comment type="interaction">
    <interactant intactId="EBI-8787464">
        <id>Q9NU19</id>
    </interactant>
    <interactant intactId="EBI-10961706">
        <id>Q96ED9-2</id>
        <label>HOOK2</label>
    </interactant>
    <organismsDiffer>false</organismsDiffer>
    <experiments>3</experiments>
</comment>
<comment type="interaction">
    <interactant intactId="EBI-8787464">
        <id>Q9NU19</id>
    </interactant>
    <interactant intactId="EBI-742664">
        <id>Q9BPX1</id>
        <label>HSD17B14</label>
    </interactant>
    <organismsDiffer>false</organismsDiffer>
    <experiments>7</experiments>
</comment>
<comment type="interaction">
    <interactant intactId="EBI-8787464">
        <id>Q9NU19</id>
    </interactant>
    <interactant intactId="EBI-747204">
        <id>Q9UKT9</id>
        <label>IKZF3</label>
    </interactant>
    <organismsDiffer>false</organismsDiffer>
    <experiments>9</experiments>
</comment>
<comment type="interaction">
    <interactant intactId="EBI-8787464">
        <id>Q9NU19</id>
    </interactant>
    <interactant intactId="EBI-14069005">
        <id>Q9BVG8-5</id>
        <label>KIFC3</label>
    </interactant>
    <organismsDiffer>false</organismsDiffer>
    <experiments>3</experiments>
</comment>
<comment type="interaction">
    <interactant intactId="EBI-8787464">
        <id>Q9NU19</id>
    </interactant>
    <interactant intactId="EBI-1047093">
        <id>O76011</id>
        <label>KRT34</label>
    </interactant>
    <organismsDiffer>false</organismsDiffer>
    <experiments>3</experiments>
</comment>
<comment type="interaction">
    <interactant intactId="EBI-8787464">
        <id>Q9NU19</id>
    </interactant>
    <interactant intactId="EBI-10171697">
        <id>Q6A162</id>
        <label>KRT40</label>
    </interactant>
    <organismsDiffer>false</organismsDiffer>
    <experiments>4</experiments>
</comment>
<comment type="interaction">
    <interactant intactId="EBI-8787464">
        <id>Q9NU19</id>
    </interactant>
    <interactant intactId="EBI-8474075">
        <id>Q68G74</id>
        <label>LHX8</label>
    </interactant>
    <organismsDiffer>false</organismsDiffer>
    <experiments>3</experiments>
</comment>
<comment type="interaction">
    <interactant intactId="EBI-8787464">
        <id>Q9NU19</id>
    </interactant>
    <interactant intactId="EBI-12864460">
        <id>P48059-3</id>
        <label>LIMS1</label>
    </interactant>
    <organismsDiffer>false</organismsDiffer>
    <experiments>3</experiments>
</comment>
<comment type="interaction">
    <interactant intactId="EBI-8787464">
        <id>Q9NU19</id>
    </interactant>
    <interactant intactId="EBI-10172526">
        <id>Q9UJV3-2</id>
        <label>MID2</label>
    </interactant>
    <organismsDiffer>false</organismsDiffer>
    <experiments>3</experiments>
</comment>
<comment type="interaction">
    <interactant intactId="EBI-8787464">
        <id>Q9NU19</id>
    </interactant>
    <interactant intactId="EBI-11522433">
        <id>Q5JR59-3</id>
        <label>MTUS2</label>
    </interactant>
    <organismsDiffer>false</organismsDiffer>
    <experiments>4</experiments>
</comment>
<comment type="interaction">
    <interactant intactId="EBI-8787464">
        <id>Q9NU19</id>
    </interactant>
    <interactant intactId="EBI-79165">
        <id>Q9NRD5</id>
        <label>PICK1</label>
    </interactant>
    <organismsDiffer>false</organismsDiffer>
    <experiments>3</experiments>
</comment>
<comment type="interaction">
    <interactant intactId="EBI-8787464">
        <id>Q9NU19</id>
    </interactant>
    <interactant intactId="EBI-949255">
        <id>Q58EX7</id>
        <label>PLEKHG4</label>
    </interactant>
    <organismsDiffer>false</organismsDiffer>
    <experiments>3</experiments>
</comment>
<comment type="interaction">
    <interactant intactId="EBI-8787464">
        <id>Q9NU19</id>
    </interactant>
    <interactant intactId="EBI-10171633">
        <id>Q96PV4</id>
        <label>PNMA5</label>
    </interactant>
    <organismsDiffer>false</organismsDiffer>
    <experiments>4</experiments>
</comment>
<comment type="interaction">
    <interactant intactId="EBI-8787464">
        <id>Q9NU19</id>
    </interactant>
    <interactant intactId="EBI-721525">
        <id>P98175</id>
        <label>RBM10</label>
    </interactant>
    <organismsDiffer>false</organismsDiffer>
    <experiments>3</experiments>
</comment>
<comment type="interaction">
    <interactant intactId="EBI-8787464">
        <id>Q9NU19</id>
    </interactant>
    <interactant intactId="EBI-473821">
        <id>Q5RL73</id>
        <label>RBM48</label>
    </interactant>
    <organismsDiffer>false</organismsDiffer>
    <experiments>3</experiments>
</comment>
<comment type="interaction">
    <interactant intactId="EBI-8787464">
        <id>Q9NU19</id>
    </interactant>
    <interactant intactId="EBI-10829018">
        <id>Q04864-2</id>
        <label>REL</label>
    </interactant>
    <organismsDiffer>false</organismsDiffer>
    <experiments>3</experiments>
</comment>
<comment type="interaction">
    <interactant intactId="EBI-8787464">
        <id>Q9NU19</id>
    </interactant>
    <interactant intactId="EBI-747107">
        <id>Q8IUQ4</id>
        <label>SIAH1</label>
    </interactant>
    <organismsDiffer>false</organismsDiffer>
    <experiments>3</experiments>
</comment>
<comment type="interaction">
    <interactant intactId="EBI-8787464">
        <id>Q9NU19</id>
    </interactant>
    <interactant intactId="EBI-10269374">
        <id>Q8ND83</id>
        <label>SLAIN1</label>
    </interactant>
    <organismsDiffer>false</organismsDiffer>
    <experiments>3</experiments>
</comment>
<comment type="interaction">
    <interactant intactId="EBI-8787464">
        <id>Q9NU19</id>
    </interactant>
    <interactant intactId="EBI-741237">
        <id>O60504</id>
        <label>SORBS3</label>
    </interactant>
    <organismsDiffer>false</organismsDiffer>
    <experiments>4</experiments>
</comment>
<comment type="interaction">
    <interactant intactId="EBI-8787464">
        <id>Q9NU19</id>
    </interactant>
    <interactant intactId="EBI-744066">
        <id>Q9UM82</id>
        <label>SPATA2</label>
    </interactant>
    <organismsDiffer>false</organismsDiffer>
    <experiments>3</experiments>
</comment>
<comment type="interaction">
    <interactant intactId="EBI-8787464">
        <id>Q9NU19</id>
    </interactant>
    <interactant intactId="EBI-2554984">
        <id>Q9Y6A5</id>
        <label>TACC3</label>
    </interactant>
    <organismsDiffer>false</organismsDiffer>
    <experiments>7</experiments>
</comment>
<comment type="interaction">
    <interactant intactId="EBI-8787464">
        <id>Q9NU19</id>
    </interactant>
    <interactant intactId="EBI-11139477">
        <id>Q96N21</id>
        <label>TEPSIN</label>
    </interactant>
    <organismsDiffer>false</organismsDiffer>
    <experiments>3</experiments>
</comment>
<comment type="interaction">
    <interactant intactId="EBI-8787464">
        <id>Q9NU19</id>
    </interactant>
    <interactant intactId="EBI-742397">
        <id>Q8IYF3</id>
        <label>TEX11</label>
    </interactant>
    <organismsDiffer>false</organismsDiffer>
    <experiments>3</experiments>
</comment>
<comment type="interaction">
    <interactant intactId="EBI-8787464">
        <id>Q9NU19</id>
    </interactant>
    <interactant intactId="EBI-10175039">
        <id>Q13625-3</id>
        <label>TP53BP2</label>
    </interactant>
    <organismsDiffer>false</organismsDiffer>
    <experiments>3</experiments>
</comment>
<comment type="interaction">
    <interactant intactId="EBI-8787464">
        <id>Q9NU19</id>
    </interactant>
    <interactant intactId="EBI-740098">
        <id>P36406</id>
        <label>TRIM23</label>
    </interactant>
    <organismsDiffer>false</organismsDiffer>
    <experiments>8</experiments>
</comment>
<comment type="interaction">
    <interactant intactId="EBI-8787464">
        <id>Q9NU19</id>
    </interactant>
    <interactant intactId="EBI-719493">
        <id>P14373</id>
        <label>TRIM27</label>
    </interactant>
    <organismsDiffer>false</organismsDiffer>
    <experiments>4</experiments>
</comment>
<comment type="interaction">
    <interactant intactId="EBI-8787464">
        <id>Q9NU19</id>
    </interactant>
    <interactant intactId="EBI-2130429">
        <id>Q9BYV2</id>
        <label>TRIM54</label>
    </interactant>
    <organismsDiffer>false</organismsDiffer>
    <experiments>5</experiments>
</comment>
<comment type="interaction">
    <interactant intactId="EBI-8787464">
        <id>Q9NU19</id>
    </interactant>
    <interactant intactId="EBI-742327">
        <id>Q15654</id>
        <label>TRIP6</label>
    </interactant>
    <organismsDiffer>false</organismsDiffer>
    <experiments>3</experiments>
</comment>
<comment type="interaction">
    <interactant intactId="EBI-8787464">
        <id>Q9NU19</id>
    </interactant>
    <interactant intactId="EBI-2799833">
        <id>Q8N1B4</id>
        <label>VPS52</label>
    </interactant>
    <organismsDiffer>false</organismsDiffer>
    <experiments>7</experiments>
</comment>
<comment type="interaction">
    <interactant intactId="EBI-8787464">
        <id>Q9NU19</id>
    </interactant>
    <interactant intactId="EBI-11419867">
        <id>Q8TF47</id>
        <label>ZFP90</label>
    </interactant>
    <organismsDiffer>false</organismsDiffer>
    <experiments>3</experiments>
</comment>
<comment type="interaction">
    <interactant intactId="EBI-8787464">
        <id>Q9NU19</id>
    </interactant>
    <interactant intactId="EBI-11962468">
        <id>Q7Z4V0</id>
        <label>ZNF438</label>
    </interactant>
    <organismsDiffer>false</organismsDiffer>
    <experiments>3</experiments>
</comment>
<comment type="interaction">
    <interactant intactId="EBI-8787464">
        <id>Q9NU19</id>
    </interactant>
    <interactant intactId="EBI-7254550">
        <id>P36508</id>
        <label>ZNF76</label>
    </interactant>
    <organismsDiffer>false</organismsDiffer>
    <experiments>3</experiments>
</comment>
<comment type="interaction">
    <interactant intactId="EBI-8787464">
        <id>Q9NU19</id>
    </interactant>
    <interactant intactId="EBI-7252920">
        <id>Q8NAM6</id>
        <label>ZSCAN4</label>
    </interactant>
    <organismsDiffer>false</organismsDiffer>
    <experiments>3</experiments>
</comment>
<comment type="sequence caution" evidence="5">
    <conflict type="erroneous initiation">
        <sequence resource="EMBL-CDS" id="BAA91099"/>
    </conflict>
</comment>
<dbReference type="EMBL" id="AB449909">
    <property type="protein sequence ID" value="BAH16652.1"/>
    <property type="molecule type" value="mRNA"/>
</dbReference>
<dbReference type="EMBL" id="AY313781">
    <property type="protein sequence ID" value="AAQ72548.1"/>
    <property type="molecule type" value="mRNA"/>
</dbReference>
<dbReference type="EMBL" id="AK000344">
    <property type="protein sequence ID" value="BAA91099.1"/>
    <property type="status" value="ALT_INIT"/>
    <property type="molecule type" value="mRNA"/>
</dbReference>
<dbReference type="EMBL" id="AK292893">
    <property type="protein sequence ID" value="BAF85582.1"/>
    <property type="molecule type" value="mRNA"/>
</dbReference>
<dbReference type="EMBL" id="AL096712">
    <property type="status" value="NOT_ANNOTATED_CDS"/>
    <property type="molecule type" value="Genomic_DNA"/>
</dbReference>
<dbReference type="EMBL" id="AL353579">
    <property type="status" value="NOT_ANNOTATED_CDS"/>
    <property type="molecule type" value="Genomic_DNA"/>
</dbReference>
<dbReference type="EMBL" id="AL589667">
    <property type="status" value="NOT_ANNOTATED_CDS"/>
    <property type="molecule type" value="Genomic_DNA"/>
</dbReference>
<dbReference type="EMBL" id="CH471081">
    <property type="protein sequence ID" value="EAX03939.1"/>
    <property type="molecule type" value="Genomic_DNA"/>
</dbReference>
<dbReference type="EMBL" id="BC000291">
    <property type="protein sequence ID" value="AAH00291.2"/>
    <property type="molecule type" value="mRNA"/>
</dbReference>
<dbReference type="EMBL" id="BC000743">
    <property type="protein sequence ID" value="AAH00743.2"/>
    <property type="molecule type" value="mRNA"/>
</dbReference>
<dbReference type="EMBL" id="BC001927">
    <property type="protein sequence ID" value="AAH01927.1"/>
    <property type="molecule type" value="mRNA"/>
</dbReference>
<dbReference type="EMBL" id="BC002720">
    <property type="protein sequence ID" value="AAH02720.2"/>
    <property type="molecule type" value="mRNA"/>
</dbReference>
<dbReference type="EMBL" id="BC063523">
    <property type="protein sequence ID" value="AAH63523.1"/>
    <property type="molecule type" value="mRNA"/>
</dbReference>
<dbReference type="EMBL" id="BC109026">
    <property type="protein sequence ID" value="AAI09027.1"/>
    <property type="molecule type" value="mRNA"/>
</dbReference>
<dbReference type="EMBL" id="BC109027">
    <property type="protein sequence ID" value="AAI09028.1"/>
    <property type="molecule type" value="mRNA"/>
</dbReference>
<dbReference type="CCDS" id="CCDS4832.1"/>
<dbReference type="RefSeq" id="NP_060242.2">
    <property type="nucleotide sequence ID" value="NM_017772.3"/>
</dbReference>
<dbReference type="PDB" id="6D0S">
    <property type="method" value="X-ray"/>
    <property type="resolution" value="2.30 A"/>
    <property type="chains" value="A=178-505"/>
</dbReference>
<dbReference type="PDBsum" id="6D0S"/>
<dbReference type="SMR" id="Q9NU19"/>
<dbReference type="BioGRID" id="120772">
    <property type="interactions" value="206"/>
</dbReference>
<dbReference type="FunCoup" id="Q9NU19">
    <property type="interactions" value="2785"/>
</dbReference>
<dbReference type="IntAct" id="Q9NU19">
    <property type="interactions" value="172"/>
</dbReference>
<dbReference type="MINT" id="Q9NU19"/>
<dbReference type="STRING" id="9606.ENSP00000362590"/>
<dbReference type="GlyGen" id="Q9NU19">
    <property type="glycosylation" value="1 site, 1 O-linked glycan (1 site)"/>
</dbReference>
<dbReference type="iPTMnet" id="Q9NU19"/>
<dbReference type="MetOSite" id="Q9NU19"/>
<dbReference type="PhosphoSitePlus" id="Q9NU19"/>
<dbReference type="BioMuta" id="TBC1D22B"/>
<dbReference type="DMDM" id="47117913"/>
<dbReference type="jPOST" id="Q9NU19"/>
<dbReference type="MassIVE" id="Q9NU19"/>
<dbReference type="PaxDb" id="9606-ENSP00000362590"/>
<dbReference type="PeptideAtlas" id="Q9NU19"/>
<dbReference type="ProteomicsDB" id="82648"/>
<dbReference type="Pumba" id="Q9NU19"/>
<dbReference type="Antibodypedia" id="29804">
    <property type="antibodies" value="25 antibodies from 9 providers"/>
</dbReference>
<dbReference type="DNASU" id="55633"/>
<dbReference type="Ensembl" id="ENST00000373491.3">
    <property type="protein sequence ID" value="ENSP00000362590.3"/>
    <property type="gene ID" value="ENSG00000065491.8"/>
</dbReference>
<dbReference type="GeneID" id="55633"/>
<dbReference type="KEGG" id="hsa:55633"/>
<dbReference type="MANE-Select" id="ENST00000373491.3">
    <property type="protein sequence ID" value="ENSP00000362590.3"/>
    <property type="RefSeq nucleotide sequence ID" value="NM_017772.4"/>
    <property type="RefSeq protein sequence ID" value="NP_060242.2"/>
</dbReference>
<dbReference type="UCSC" id="uc003onn.3">
    <property type="organism name" value="human"/>
</dbReference>
<dbReference type="AGR" id="HGNC:21602"/>
<dbReference type="CTD" id="55633"/>
<dbReference type="DisGeNET" id="55633"/>
<dbReference type="GeneCards" id="TBC1D22B"/>
<dbReference type="HGNC" id="HGNC:21602">
    <property type="gene designation" value="TBC1D22B"/>
</dbReference>
<dbReference type="HPA" id="ENSG00000065491">
    <property type="expression patterns" value="Low tissue specificity"/>
</dbReference>
<dbReference type="MIM" id="616880">
    <property type="type" value="gene"/>
</dbReference>
<dbReference type="neXtProt" id="NX_Q9NU19"/>
<dbReference type="OpenTargets" id="ENSG00000065491"/>
<dbReference type="PharmGKB" id="PA134867087"/>
<dbReference type="VEuPathDB" id="HostDB:ENSG00000065491"/>
<dbReference type="eggNOG" id="KOG1092">
    <property type="taxonomic scope" value="Eukaryota"/>
</dbReference>
<dbReference type="GeneTree" id="ENSGT00940000157472"/>
<dbReference type="HOGENOM" id="CLU_018687_6_0_1"/>
<dbReference type="InParanoid" id="Q9NU19"/>
<dbReference type="OMA" id="SCYNIFN"/>
<dbReference type="OrthoDB" id="26371at2759"/>
<dbReference type="PAN-GO" id="Q9NU19">
    <property type="GO annotations" value="2 GO annotations based on evolutionary models"/>
</dbReference>
<dbReference type="PhylomeDB" id="Q9NU19"/>
<dbReference type="TreeFam" id="TF314211"/>
<dbReference type="PathwayCommons" id="Q9NU19"/>
<dbReference type="SignaLink" id="Q9NU19"/>
<dbReference type="BioGRID-ORCS" id="55633">
    <property type="hits" value="22 hits in 1155 CRISPR screens"/>
</dbReference>
<dbReference type="GenomeRNAi" id="55633"/>
<dbReference type="Pharos" id="Q9NU19">
    <property type="development level" value="Tbio"/>
</dbReference>
<dbReference type="PRO" id="PR:Q9NU19"/>
<dbReference type="Proteomes" id="UP000005640">
    <property type="component" value="Chromosome 6"/>
</dbReference>
<dbReference type="RNAct" id="Q9NU19">
    <property type="molecule type" value="protein"/>
</dbReference>
<dbReference type="Bgee" id="ENSG00000065491">
    <property type="expression patterns" value="Expressed in lower esophagus mucosa and 144 other cell types or tissues"/>
</dbReference>
<dbReference type="GO" id="GO:0005794">
    <property type="term" value="C:Golgi apparatus"/>
    <property type="evidence" value="ECO:0000318"/>
    <property type="project" value="GO_Central"/>
</dbReference>
<dbReference type="GO" id="GO:0071889">
    <property type="term" value="F:14-3-3 protein binding"/>
    <property type="evidence" value="ECO:0000314"/>
    <property type="project" value="UniProtKB"/>
</dbReference>
<dbReference type="GO" id="GO:0005096">
    <property type="term" value="F:GTPase activator activity"/>
    <property type="evidence" value="ECO:0000318"/>
    <property type="project" value="GO_Central"/>
</dbReference>
<dbReference type="FunFam" id="1.10.10.750:FF:000009">
    <property type="entry name" value="TBC1 domain family member 22A"/>
    <property type="match status" value="1"/>
</dbReference>
<dbReference type="FunFam" id="1.10.472.80:FF:000001">
    <property type="entry name" value="TBC1 domain family member 22B"/>
    <property type="match status" value="1"/>
</dbReference>
<dbReference type="FunFam" id="1.10.8.270:FF:000004">
    <property type="entry name" value="TBC1 domain family, member 22B"/>
    <property type="match status" value="1"/>
</dbReference>
<dbReference type="Gene3D" id="1.10.8.270">
    <property type="entry name" value="putative rabgap domain of human tbc1 domain family member 14 like domains"/>
    <property type="match status" value="1"/>
</dbReference>
<dbReference type="Gene3D" id="1.10.10.750">
    <property type="entry name" value="Ypt/Rab-GAP domain of gyp1p, domain 1"/>
    <property type="match status" value="1"/>
</dbReference>
<dbReference type="Gene3D" id="1.10.472.80">
    <property type="entry name" value="Ypt/Rab-GAP domain of gyp1p, domain 3"/>
    <property type="match status" value="1"/>
</dbReference>
<dbReference type="InterPro" id="IPR000195">
    <property type="entry name" value="Rab-GAP-TBC_dom"/>
</dbReference>
<dbReference type="InterPro" id="IPR035969">
    <property type="entry name" value="Rab-GAP_TBC_sf"/>
</dbReference>
<dbReference type="PANTHER" id="PTHR22957:SF462">
    <property type="entry name" value="TBC1 DOMAIN FAMILY MEMBER 22B"/>
    <property type="match status" value="1"/>
</dbReference>
<dbReference type="PANTHER" id="PTHR22957">
    <property type="entry name" value="TBC1 DOMAIN FAMILY MEMBER GTPASE-ACTIVATING PROTEIN"/>
    <property type="match status" value="1"/>
</dbReference>
<dbReference type="Pfam" id="PF00566">
    <property type="entry name" value="RabGAP-TBC"/>
    <property type="match status" value="1"/>
</dbReference>
<dbReference type="SMART" id="SM00164">
    <property type="entry name" value="TBC"/>
    <property type="match status" value="1"/>
</dbReference>
<dbReference type="SUPFAM" id="SSF47923">
    <property type="entry name" value="Ypt/Rab-GAP domain of gyp1p"/>
    <property type="match status" value="2"/>
</dbReference>
<dbReference type="PROSITE" id="PS50086">
    <property type="entry name" value="TBC_RABGAP"/>
    <property type="match status" value="1"/>
</dbReference>
<accession>Q9NU19</accession>
<accession>A8KA28</accession>
<accession>Q32MQ8</accession>
<accession>Q5VUK9</accession>
<accession>Q6P4C3</accession>
<accession>Q7Z6P7</accession>
<accession>Q9BPV6</accession>
<accession>Q9BUT5</accession>
<accession>Q9NXB6</accession>
<gene>
    <name type="primary">TBC1D22B</name>
    <name type="synonym">C6orf197</name>
</gene>
<organism>
    <name type="scientific">Homo sapiens</name>
    <name type="common">Human</name>
    <dbReference type="NCBI Taxonomy" id="9606"/>
    <lineage>
        <taxon>Eukaryota</taxon>
        <taxon>Metazoa</taxon>
        <taxon>Chordata</taxon>
        <taxon>Craniata</taxon>
        <taxon>Vertebrata</taxon>
        <taxon>Euteleostomi</taxon>
        <taxon>Mammalia</taxon>
        <taxon>Eutheria</taxon>
        <taxon>Euarchontoglires</taxon>
        <taxon>Primates</taxon>
        <taxon>Haplorrhini</taxon>
        <taxon>Catarrhini</taxon>
        <taxon>Hominidae</taxon>
        <taxon>Homo</taxon>
    </lineage>
</organism>
<evidence type="ECO:0000250" key="1"/>
<evidence type="ECO:0000255" key="2">
    <source>
        <dbReference type="PROSITE-ProRule" id="PRU00163"/>
    </source>
</evidence>
<evidence type="ECO:0000256" key="3">
    <source>
        <dbReference type="SAM" id="MobiDB-lite"/>
    </source>
</evidence>
<evidence type="ECO:0000269" key="4">
    <source>
    </source>
</evidence>
<evidence type="ECO:0000305" key="5"/>
<evidence type="ECO:0007744" key="6">
    <source>
    </source>
</evidence>
<evidence type="ECO:0007829" key="7">
    <source>
        <dbReference type="PDB" id="6D0S"/>
    </source>
</evidence>
<name>TB22B_HUMAN</name>